<dbReference type="EMBL" id="U84754">
    <property type="protein sequence ID" value="AAB88072.1"/>
    <property type="molecule type" value="Genomic_DNA"/>
</dbReference>
<dbReference type="EMBL" id="AE014296">
    <property type="protein sequence ID" value="AAF50693.1"/>
    <property type="molecule type" value="Genomic_DNA"/>
</dbReference>
<dbReference type="RefSeq" id="NP_477272.1">
    <property type="nucleotide sequence ID" value="NM_057924.3"/>
</dbReference>
<dbReference type="FunCoup" id="C0HL65">
    <property type="interactions" value="9"/>
</dbReference>
<dbReference type="DNASU" id="38703"/>
<dbReference type="EnsemblMetazoa" id="FBtr0077058">
    <property type="protein sequence ID" value="FBpp0076766"/>
    <property type="gene ID" value="FBgn0020638"/>
</dbReference>
<dbReference type="EnsemblMetazoa" id="FBtr0077059">
    <property type="protein sequence ID" value="FBpp0076767"/>
    <property type="gene ID" value="FBgn0020637"/>
</dbReference>
<dbReference type="GeneID" id="38702"/>
<dbReference type="GeneID" id="38703"/>
<dbReference type="KEGG" id="dme:Dmel_CG10530"/>
<dbReference type="KEGG" id="dme:Dmel_CG10534"/>
<dbReference type="AGR" id="FB:FBgn0020637"/>
<dbReference type="CTD" id="38702"/>
<dbReference type="CTD" id="38703"/>
<dbReference type="FlyBase" id="FBgn0020637">
    <property type="gene designation" value="Lcp65Ag2"/>
</dbReference>
<dbReference type="VEuPathDB" id="VectorBase:FBgn0020637"/>
<dbReference type="VEuPathDB" id="VectorBase:FBgn0020638"/>
<dbReference type="InParanoid" id="C0HL65"/>
<dbReference type="OMA" id="FQYAWET"/>
<dbReference type="OrthoDB" id="7255276at2759"/>
<dbReference type="ChiTaRS" id="Lcp65Ag2">
    <property type="organism name" value="fly"/>
</dbReference>
<dbReference type="PRO" id="PR:C0HL65"/>
<dbReference type="Proteomes" id="UP000000803">
    <property type="component" value="Chromosome 3L"/>
</dbReference>
<dbReference type="Bgee" id="FBgn0020637">
    <property type="expression patterns" value="Expressed in adult tracheocyte (Drosophila) in post-embryonic organism and 12 other cell types or tissues"/>
</dbReference>
<dbReference type="ExpressionAtlas" id="C0HL65">
    <property type="expression patterns" value="baseline and differential"/>
</dbReference>
<dbReference type="GO" id="GO:0062129">
    <property type="term" value="C:chitin-based extracellular matrix"/>
    <property type="evidence" value="ECO:0000255"/>
    <property type="project" value="FlyBase"/>
</dbReference>
<dbReference type="GO" id="GO:0008010">
    <property type="term" value="F:structural constituent of chitin-based larval cuticle"/>
    <property type="evidence" value="ECO:0000255"/>
    <property type="project" value="FlyBase"/>
</dbReference>
<dbReference type="GO" id="GO:0040003">
    <property type="term" value="P:chitin-based cuticle development"/>
    <property type="evidence" value="ECO:0000255"/>
    <property type="project" value="FlyBase"/>
</dbReference>
<dbReference type="InterPro" id="IPR031311">
    <property type="entry name" value="CHIT_BIND_RR_consensus"/>
</dbReference>
<dbReference type="InterPro" id="IPR050468">
    <property type="entry name" value="Cuticle_Struct_Prot"/>
</dbReference>
<dbReference type="InterPro" id="IPR000618">
    <property type="entry name" value="Insect_cuticle"/>
</dbReference>
<dbReference type="PANTHER" id="PTHR10380:SF218">
    <property type="entry name" value="ADULT CUTICLE PROTEIN 65AA-RELATED"/>
    <property type="match status" value="1"/>
</dbReference>
<dbReference type="PANTHER" id="PTHR10380">
    <property type="entry name" value="CUTICLE PROTEIN"/>
    <property type="match status" value="1"/>
</dbReference>
<dbReference type="Pfam" id="PF00379">
    <property type="entry name" value="Chitin_bind_4"/>
    <property type="match status" value="1"/>
</dbReference>
<dbReference type="PRINTS" id="PR00947">
    <property type="entry name" value="CUTICLE"/>
</dbReference>
<dbReference type="PROSITE" id="PS00233">
    <property type="entry name" value="CHIT_BIND_RR_1"/>
    <property type="match status" value="1"/>
</dbReference>
<dbReference type="PROSITE" id="PS51155">
    <property type="entry name" value="CHIT_BIND_RR_2"/>
    <property type="match status" value="1"/>
</dbReference>
<feature type="signal peptide" evidence="2">
    <location>
        <begin position="1"/>
        <end position="18"/>
    </location>
</feature>
<feature type="chain" id="PRO_0000443304" description="Larval cuticle protein 65Ag2">
    <location>
        <begin position="19"/>
        <end position="105"/>
    </location>
</feature>
<feature type="domain" description="Chitin-binding type R&amp;R" evidence="1">
    <location>
        <begin position="34"/>
        <end position="103"/>
    </location>
</feature>
<proteinExistence type="evidence at protein level"/>
<organism>
    <name type="scientific">Drosophila melanogaster</name>
    <name type="common">Fruit fly</name>
    <dbReference type="NCBI Taxonomy" id="7227"/>
    <lineage>
        <taxon>Eukaryota</taxon>
        <taxon>Metazoa</taxon>
        <taxon>Ecdysozoa</taxon>
        <taxon>Arthropoda</taxon>
        <taxon>Hexapoda</taxon>
        <taxon>Insecta</taxon>
        <taxon>Pterygota</taxon>
        <taxon>Neoptera</taxon>
        <taxon>Endopterygota</taxon>
        <taxon>Diptera</taxon>
        <taxon>Brachycera</taxon>
        <taxon>Muscomorpha</taxon>
        <taxon>Ephydroidea</taxon>
        <taxon>Drosophilidae</taxon>
        <taxon>Drosophila</taxon>
        <taxon>Sophophora</taxon>
    </lineage>
</organism>
<reference key="1">
    <citation type="journal article" date="1997" name="Genetics">
        <title>A cluster of cuticle genes of Drosophila at 65A: sequence, structure and evolution.</title>
        <authorList>
            <person name="Charles J.-P."/>
            <person name="Chihara C."/>
            <person name="Nejad S."/>
            <person name="Riddiford L.M."/>
        </authorList>
    </citation>
    <scope>NUCLEOTIDE SEQUENCE [GENOMIC DNA]</scope>
    <source>
        <strain>Iso-1</strain>
    </source>
</reference>
<reference key="2">
    <citation type="journal article" date="2000" name="Science">
        <title>The genome sequence of Drosophila melanogaster.</title>
        <authorList>
            <person name="Adams M.D."/>
            <person name="Celniker S.E."/>
            <person name="Holt R.A."/>
            <person name="Evans C.A."/>
            <person name="Gocayne J.D."/>
            <person name="Amanatides P.G."/>
            <person name="Scherer S.E."/>
            <person name="Li P.W."/>
            <person name="Hoskins R.A."/>
            <person name="Galle R.F."/>
            <person name="George R.A."/>
            <person name="Lewis S.E."/>
            <person name="Richards S."/>
            <person name="Ashburner M."/>
            <person name="Henderson S.N."/>
            <person name="Sutton G.G."/>
            <person name="Wortman J.R."/>
            <person name="Yandell M.D."/>
            <person name="Zhang Q."/>
            <person name="Chen L.X."/>
            <person name="Brandon R.C."/>
            <person name="Rogers Y.-H.C."/>
            <person name="Blazej R.G."/>
            <person name="Champe M."/>
            <person name="Pfeiffer B.D."/>
            <person name="Wan K.H."/>
            <person name="Doyle C."/>
            <person name="Baxter E.G."/>
            <person name="Helt G."/>
            <person name="Nelson C.R."/>
            <person name="Miklos G.L.G."/>
            <person name="Abril J.F."/>
            <person name="Agbayani A."/>
            <person name="An H.-J."/>
            <person name="Andrews-Pfannkoch C."/>
            <person name="Baldwin D."/>
            <person name="Ballew R.M."/>
            <person name="Basu A."/>
            <person name="Baxendale J."/>
            <person name="Bayraktaroglu L."/>
            <person name="Beasley E.M."/>
            <person name="Beeson K.Y."/>
            <person name="Benos P.V."/>
            <person name="Berman B.P."/>
            <person name="Bhandari D."/>
            <person name="Bolshakov S."/>
            <person name="Borkova D."/>
            <person name="Botchan M.R."/>
            <person name="Bouck J."/>
            <person name="Brokstein P."/>
            <person name="Brottier P."/>
            <person name="Burtis K.C."/>
            <person name="Busam D.A."/>
            <person name="Butler H."/>
            <person name="Cadieu E."/>
            <person name="Center A."/>
            <person name="Chandra I."/>
            <person name="Cherry J.M."/>
            <person name="Cawley S."/>
            <person name="Dahlke C."/>
            <person name="Davenport L.B."/>
            <person name="Davies P."/>
            <person name="de Pablos B."/>
            <person name="Delcher A."/>
            <person name="Deng Z."/>
            <person name="Mays A.D."/>
            <person name="Dew I."/>
            <person name="Dietz S.M."/>
            <person name="Dodson K."/>
            <person name="Doup L.E."/>
            <person name="Downes M."/>
            <person name="Dugan-Rocha S."/>
            <person name="Dunkov B.C."/>
            <person name="Dunn P."/>
            <person name="Durbin K.J."/>
            <person name="Evangelista C.C."/>
            <person name="Ferraz C."/>
            <person name="Ferriera S."/>
            <person name="Fleischmann W."/>
            <person name="Fosler C."/>
            <person name="Gabrielian A.E."/>
            <person name="Garg N.S."/>
            <person name="Gelbart W.M."/>
            <person name="Glasser K."/>
            <person name="Glodek A."/>
            <person name="Gong F."/>
            <person name="Gorrell J.H."/>
            <person name="Gu Z."/>
            <person name="Guan P."/>
            <person name="Harris M."/>
            <person name="Harris N.L."/>
            <person name="Harvey D.A."/>
            <person name="Heiman T.J."/>
            <person name="Hernandez J.R."/>
            <person name="Houck J."/>
            <person name="Hostin D."/>
            <person name="Houston K.A."/>
            <person name="Howland T.J."/>
            <person name="Wei M.-H."/>
            <person name="Ibegwam C."/>
            <person name="Jalali M."/>
            <person name="Kalush F."/>
            <person name="Karpen G.H."/>
            <person name="Ke Z."/>
            <person name="Kennison J.A."/>
            <person name="Ketchum K.A."/>
            <person name="Kimmel B.E."/>
            <person name="Kodira C.D."/>
            <person name="Kraft C.L."/>
            <person name="Kravitz S."/>
            <person name="Kulp D."/>
            <person name="Lai Z."/>
            <person name="Lasko P."/>
            <person name="Lei Y."/>
            <person name="Levitsky A.A."/>
            <person name="Li J.H."/>
            <person name="Li Z."/>
            <person name="Liang Y."/>
            <person name="Lin X."/>
            <person name="Liu X."/>
            <person name="Mattei B."/>
            <person name="McIntosh T.C."/>
            <person name="McLeod M.P."/>
            <person name="McPherson D."/>
            <person name="Merkulov G."/>
            <person name="Milshina N.V."/>
            <person name="Mobarry C."/>
            <person name="Morris J."/>
            <person name="Moshrefi A."/>
            <person name="Mount S.M."/>
            <person name="Moy M."/>
            <person name="Murphy B."/>
            <person name="Murphy L."/>
            <person name="Muzny D.M."/>
            <person name="Nelson D.L."/>
            <person name="Nelson D.R."/>
            <person name="Nelson K.A."/>
            <person name="Nixon K."/>
            <person name="Nusskern D.R."/>
            <person name="Pacleb J.M."/>
            <person name="Palazzolo M."/>
            <person name="Pittman G.S."/>
            <person name="Pan S."/>
            <person name="Pollard J."/>
            <person name="Puri V."/>
            <person name="Reese M.G."/>
            <person name="Reinert K."/>
            <person name="Remington K."/>
            <person name="Saunders R.D.C."/>
            <person name="Scheeler F."/>
            <person name="Shen H."/>
            <person name="Shue B.C."/>
            <person name="Siden-Kiamos I."/>
            <person name="Simpson M."/>
            <person name="Skupski M.P."/>
            <person name="Smith T.J."/>
            <person name="Spier E."/>
            <person name="Spradling A.C."/>
            <person name="Stapleton M."/>
            <person name="Strong R."/>
            <person name="Sun E."/>
            <person name="Svirskas R."/>
            <person name="Tector C."/>
            <person name="Turner R."/>
            <person name="Venter E."/>
            <person name="Wang A.H."/>
            <person name="Wang X."/>
            <person name="Wang Z.-Y."/>
            <person name="Wassarman D.A."/>
            <person name="Weinstock G.M."/>
            <person name="Weissenbach J."/>
            <person name="Williams S.M."/>
            <person name="Woodage T."/>
            <person name="Worley K.C."/>
            <person name="Wu D."/>
            <person name="Yang S."/>
            <person name="Yao Q.A."/>
            <person name="Ye J."/>
            <person name="Yeh R.-F."/>
            <person name="Zaveri J.S."/>
            <person name="Zhan M."/>
            <person name="Zhang G."/>
            <person name="Zhao Q."/>
            <person name="Zheng L."/>
            <person name="Zheng X.H."/>
            <person name="Zhong F.N."/>
            <person name="Zhong W."/>
            <person name="Zhou X."/>
            <person name="Zhu S.C."/>
            <person name="Zhu X."/>
            <person name="Smith H.O."/>
            <person name="Gibbs R.A."/>
            <person name="Myers E.W."/>
            <person name="Rubin G.M."/>
            <person name="Venter J.C."/>
        </authorList>
    </citation>
    <scope>NUCLEOTIDE SEQUENCE [LARGE SCALE GENOMIC DNA]</scope>
    <source>
        <strain>Berkeley</strain>
    </source>
</reference>
<reference key="3">
    <citation type="journal article" date="2002" name="Genome Biol.">
        <title>Annotation of the Drosophila melanogaster euchromatic genome: a systematic review.</title>
        <authorList>
            <person name="Misra S."/>
            <person name="Crosby M.A."/>
            <person name="Mungall C.J."/>
            <person name="Matthews B.B."/>
            <person name="Campbell K.S."/>
            <person name="Hradecky P."/>
            <person name="Huang Y."/>
            <person name="Kaminker J.S."/>
            <person name="Millburn G.H."/>
            <person name="Prochnik S.E."/>
            <person name="Smith C.D."/>
            <person name="Tupy J.L."/>
            <person name="Whitfield E.J."/>
            <person name="Bayraktaroglu L."/>
            <person name="Berman B.P."/>
            <person name="Bettencourt B.R."/>
            <person name="Celniker S.E."/>
            <person name="de Grey A.D.N.J."/>
            <person name="Drysdale R.A."/>
            <person name="Harris N.L."/>
            <person name="Richter J."/>
            <person name="Russo S."/>
            <person name="Schroeder A.J."/>
            <person name="Shu S.Q."/>
            <person name="Stapleton M."/>
            <person name="Yamada C."/>
            <person name="Ashburner M."/>
            <person name="Gelbart W.M."/>
            <person name="Rubin G.M."/>
            <person name="Lewis S.E."/>
        </authorList>
    </citation>
    <scope>GENOME REANNOTATION</scope>
    <source>
        <strain>Berkeley</strain>
    </source>
</reference>
<reference key="4">
    <citation type="journal article" date="1998" name="Insect Biochem. Mol. Biol.">
        <title>Identification of proteins and developmental expression of RNAs encoded by the 65A cuticle protein gene cluster in Drosophila melanogaster.</title>
        <authorList>
            <person name="Charles J.-P."/>
            <person name="Chihara C."/>
            <person name="Nejad S."/>
            <person name="Riddiford L.M."/>
        </authorList>
    </citation>
    <scope>PROTEIN SEQUENCE OF 19-28</scope>
    <scope>FUNCTION</scope>
    <scope>DEVELOPMENTAL STAGE</scope>
    <source>
        <strain>Oregon-R</strain>
        <tissue>Larva</tissue>
    </source>
</reference>
<protein>
    <recommendedName>
        <fullName evidence="4">Larval cuticle protein 65Ag2</fullName>
    </recommendedName>
    <alternativeName>
        <fullName evidence="3">Larval cuticle protein 8</fullName>
    </alternativeName>
</protein>
<gene>
    <name evidence="4" type="primary">Lcp65Ag2</name>
    <name evidence="3" type="synonym">Lcp-g2</name>
    <name evidence="3" type="synonym">Lcp8</name>
    <name evidence="4" type="ORF">CG10534</name>
</gene>
<accession>C0HL65</accession>
<accession>P92201</accession>
<name>LCP82_DROME</name>
<sequence length="105" mass="11194">MKFLIVFVALFAVALAAPAAEEPTIVRSESDVGPESFKYDWETSDGQAAQAVGQLNDIGTENEAISVSGSYRFIADDGQTYQVNYIADKNGFQPQGAHLPVAPVA</sequence>
<keyword id="KW-0193">Cuticle</keyword>
<keyword id="KW-0903">Direct protein sequencing</keyword>
<keyword id="KW-1185">Reference proteome</keyword>
<keyword id="KW-0732">Signal</keyword>
<evidence type="ECO:0000255" key="1">
    <source>
        <dbReference type="PROSITE-ProRule" id="PRU00497"/>
    </source>
</evidence>
<evidence type="ECO:0000269" key="2">
    <source>
    </source>
</evidence>
<evidence type="ECO:0000303" key="3">
    <source>
    </source>
</evidence>
<evidence type="ECO:0000312" key="4">
    <source>
        <dbReference type="FlyBase" id="FBgn0020637"/>
    </source>
</evidence>
<comment type="function">
    <text evidence="2">Component of the cuticle of the larva.</text>
</comment>
<comment type="developmental stage">
    <text evidence="2">Expression begins in late embryo and end late third larval instar. Maximal expression is at the end of the first larval instar.</text>
</comment>